<comment type="function">
    <text>Orphan nuclear receptor.</text>
</comment>
<comment type="subcellular location">
    <subcellularLocation>
        <location evidence="1">Nucleus</location>
    </subcellularLocation>
</comment>
<comment type="similarity">
    <text evidence="3">Belongs to the nuclear hormone receptor family.</text>
</comment>
<evidence type="ECO:0000255" key="1">
    <source>
        <dbReference type="PROSITE-ProRule" id="PRU00407"/>
    </source>
</evidence>
<evidence type="ECO:0000255" key="2">
    <source>
        <dbReference type="PROSITE-ProRule" id="PRU01189"/>
    </source>
</evidence>
<evidence type="ECO:0000305" key="3"/>
<proteinExistence type="inferred from homology"/>
<feature type="chain" id="PRO_0000223597" description="Nuclear hormone receptor family member nhr-153">
    <location>
        <begin position="1"/>
        <end position="415"/>
    </location>
</feature>
<feature type="domain" description="NR LBD" evidence="2">
    <location>
        <begin position="170"/>
        <end position="406"/>
    </location>
</feature>
<feature type="DNA-binding region" description="Nuclear receptor" evidence="1">
    <location>
        <begin position="26"/>
        <end position="105"/>
    </location>
</feature>
<feature type="zinc finger region" description="NR C4-type" evidence="1">
    <location>
        <begin position="29"/>
        <end position="49"/>
    </location>
</feature>
<feature type="zinc finger region" description="NR C4-type" evidence="1">
    <location>
        <begin position="65"/>
        <end position="88"/>
    </location>
</feature>
<gene>
    <name type="primary">nhr-153</name>
    <name type="ORF">C13C4.1</name>
</gene>
<name>NH153_CAEEL</name>
<dbReference type="EMBL" id="Z92825">
    <property type="protein sequence ID" value="CAB07313.1"/>
    <property type="molecule type" value="Genomic_DNA"/>
</dbReference>
<dbReference type="PIR" id="T19234">
    <property type="entry name" value="T19234"/>
</dbReference>
<dbReference type="RefSeq" id="NP_506038.1">
    <property type="nucleotide sequence ID" value="NM_073637.1"/>
</dbReference>
<dbReference type="SMR" id="O01929"/>
<dbReference type="FunCoup" id="O01929">
    <property type="interactions" value="183"/>
</dbReference>
<dbReference type="STRING" id="6239.C13C4.1.1"/>
<dbReference type="PaxDb" id="6239-C13C4.1"/>
<dbReference type="EnsemblMetazoa" id="C13C4.1.1">
    <property type="protein sequence ID" value="C13C4.1.1"/>
    <property type="gene ID" value="WBGene00007546"/>
</dbReference>
<dbReference type="UCSC" id="C13C4.1">
    <property type="organism name" value="c. elegans"/>
</dbReference>
<dbReference type="AGR" id="WB:WBGene00007546"/>
<dbReference type="WormBase" id="C13C4.1">
    <property type="protein sequence ID" value="CE52953"/>
    <property type="gene ID" value="WBGene00007546"/>
    <property type="gene designation" value="nhr-153"/>
</dbReference>
<dbReference type="eggNOG" id="ENOG502TG66">
    <property type="taxonomic scope" value="Eukaryota"/>
</dbReference>
<dbReference type="HOGENOM" id="CLU_007368_3_1_1"/>
<dbReference type="InParanoid" id="O01929"/>
<dbReference type="OMA" id="NQCPSVC"/>
<dbReference type="PhylomeDB" id="O01929"/>
<dbReference type="Reactome" id="R-CEL-383280">
    <property type="pathway name" value="Nuclear Receptor transcription pathway"/>
</dbReference>
<dbReference type="Reactome" id="R-CEL-5362517">
    <property type="pathway name" value="Signaling by Retinoic Acid"/>
</dbReference>
<dbReference type="PRO" id="PR:O01929"/>
<dbReference type="Proteomes" id="UP000001940">
    <property type="component" value="Chromosome V"/>
</dbReference>
<dbReference type="Bgee" id="WBGene00007546">
    <property type="expression patterns" value="Expressed in material anatomical entity and 4 other cell types or tissues"/>
</dbReference>
<dbReference type="GO" id="GO:0005634">
    <property type="term" value="C:nucleus"/>
    <property type="evidence" value="ECO:0007669"/>
    <property type="project" value="UniProtKB-SubCell"/>
</dbReference>
<dbReference type="GO" id="GO:0004879">
    <property type="term" value="F:nuclear receptor activity"/>
    <property type="evidence" value="ECO:0000318"/>
    <property type="project" value="GO_Central"/>
</dbReference>
<dbReference type="GO" id="GO:0000978">
    <property type="term" value="F:RNA polymerase II cis-regulatory region sequence-specific DNA binding"/>
    <property type="evidence" value="ECO:0000318"/>
    <property type="project" value="GO_Central"/>
</dbReference>
<dbReference type="GO" id="GO:0008270">
    <property type="term" value="F:zinc ion binding"/>
    <property type="evidence" value="ECO:0007669"/>
    <property type="project" value="UniProtKB-KW"/>
</dbReference>
<dbReference type="GO" id="GO:0030154">
    <property type="term" value="P:cell differentiation"/>
    <property type="evidence" value="ECO:0000318"/>
    <property type="project" value="GO_Central"/>
</dbReference>
<dbReference type="GO" id="GO:0006357">
    <property type="term" value="P:regulation of transcription by RNA polymerase II"/>
    <property type="evidence" value="ECO:0000318"/>
    <property type="project" value="GO_Central"/>
</dbReference>
<dbReference type="GO" id="GO:0042594">
    <property type="term" value="P:response to starvation"/>
    <property type="evidence" value="ECO:0000270"/>
    <property type="project" value="WormBase"/>
</dbReference>
<dbReference type="GO" id="GO:0007614">
    <property type="term" value="P:short-term memory"/>
    <property type="evidence" value="ECO:0000316"/>
    <property type="project" value="WormBase"/>
</dbReference>
<dbReference type="CDD" id="cd06960">
    <property type="entry name" value="NR_DBD_HNF4A"/>
    <property type="match status" value="1"/>
</dbReference>
<dbReference type="FunFam" id="3.30.50.10:FF:000050">
    <property type="entry name" value="Nuclear Hormone Receptor family"/>
    <property type="match status" value="1"/>
</dbReference>
<dbReference type="FunFam" id="1.10.565.10:FF:000077">
    <property type="entry name" value="Nuclear hormone receptor family member nhr-153"/>
    <property type="match status" value="1"/>
</dbReference>
<dbReference type="Gene3D" id="3.30.50.10">
    <property type="entry name" value="Erythroid Transcription Factor GATA-1, subunit A"/>
    <property type="match status" value="1"/>
</dbReference>
<dbReference type="Gene3D" id="1.10.565.10">
    <property type="entry name" value="Retinoid X Receptor"/>
    <property type="match status" value="1"/>
</dbReference>
<dbReference type="InterPro" id="IPR049636">
    <property type="entry name" value="HNF4-like_DBD"/>
</dbReference>
<dbReference type="InterPro" id="IPR035500">
    <property type="entry name" value="NHR-like_dom_sf"/>
</dbReference>
<dbReference type="InterPro" id="IPR000536">
    <property type="entry name" value="Nucl_hrmn_rcpt_lig-bd"/>
</dbReference>
<dbReference type="InterPro" id="IPR050274">
    <property type="entry name" value="Nuclear_hormone_rcpt_NR2"/>
</dbReference>
<dbReference type="InterPro" id="IPR001628">
    <property type="entry name" value="Znf_hrmn_rcpt"/>
</dbReference>
<dbReference type="InterPro" id="IPR013088">
    <property type="entry name" value="Znf_NHR/GATA"/>
</dbReference>
<dbReference type="PANTHER" id="PTHR24083">
    <property type="entry name" value="NUCLEAR HORMONE RECEPTOR"/>
    <property type="match status" value="1"/>
</dbReference>
<dbReference type="Pfam" id="PF00104">
    <property type="entry name" value="Hormone_recep"/>
    <property type="match status" value="1"/>
</dbReference>
<dbReference type="Pfam" id="PF00105">
    <property type="entry name" value="zf-C4"/>
    <property type="match status" value="1"/>
</dbReference>
<dbReference type="PRINTS" id="PR00047">
    <property type="entry name" value="STROIDFINGER"/>
</dbReference>
<dbReference type="SMART" id="SM00430">
    <property type="entry name" value="HOLI"/>
    <property type="match status" value="1"/>
</dbReference>
<dbReference type="SMART" id="SM00399">
    <property type="entry name" value="ZnF_C4"/>
    <property type="match status" value="1"/>
</dbReference>
<dbReference type="SUPFAM" id="SSF57716">
    <property type="entry name" value="Glucocorticoid receptor-like (DNA-binding domain)"/>
    <property type="match status" value="1"/>
</dbReference>
<dbReference type="SUPFAM" id="SSF48508">
    <property type="entry name" value="Nuclear receptor ligand-binding domain"/>
    <property type="match status" value="1"/>
</dbReference>
<dbReference type="PROSITE" id="PS51843">
    <property type="entry name" value="NR_LBD"/>
    <property type="match status" value="1"/>
</dbReference>
<dbReference type="PROSITE" id="PS00031">
    <property type="entry name" value="NUCLEAR_REC_DBD_1"/>
    <property type="match status" value="1"/>
</dbReference>
<dbReference type="PROSITE" id="PS51030">
    <property type="entry name" value="NUCLEAR_REC_DBD_2"/>
    <property type="match status" value="1"/>
</dbReference>
<keyword id="KW-0238">DNA-binding</keyword>
<keyword id="KW-0479">Metal-binding</keyword>
<keyword id="KW-0539">Nucleus</keyword>
<keyword id="KW-0675">Receptor</keyword>
<keyword id="KW-1185">Reference proteome</keyword>
<keyword id="KW-0804">Transcription</keyword>
<keyword id="KW-0805">Transcription regulation</keyword>
<keyword id="KW-0862">Zinc</keyword>
<keyword id="KW-0863">Zinc-finger</keyword>
<reference key="1">
    <citation type="journal article" date="1998" name="Science">
        <title>Genome sequence of the nematode C. elegans: a platform for investigating biology.</title>
        <authorList>
            <consortium name="The C. elegans sequencing consortium"/>
        </authorList>
    </citation>
    <scope>NUCLEOTIDE SEQUENCE [LARGE SCALE GENOMIC DNA]</scope>
    <source>
        <strain>Bristol N2</strain>
    </source>
</reference>
<sequence>MTPPQKSKPKRNRRKIYKILPQNQCPSVCQICRNPAIGYHYEVPSCNGCKTFFRRTIITGRKFKCFKVSNCLDGNDVIDTSKRVCRACRFEKCVQAGMNPMAIQAEAKTDEGEELKKLIAKKFENGEKLNDGTVFFNVHDRLNQILGKLIKIETKLEKVHDNGMPMGFLDQRDLSTALSSKVIYNNMEIPSMSYTPVKISKNTGLPKRRSRNFVHSSCLASIEYSKTFDFSSAIDISSKIILLKNTALSCANLTNAYTTFRKLKSDTLLYPDGSIYGPPRRKNGPLIEKQRSFLQNTLISFMTNNVDKTEYILLKAIVLCNPAIIDLPYADSKHIQREREVYAQCLFRYCLLQHGTLHGPARFSALLSIFNVLENQQKEQKDYYLYIKLIHSQKHKDPEVLKKKCISVIYDQIMD</sequence>
<accession>O01929</accession>
<protein>
    <recommendedName>
        <fullName>Nuclear hormone receptor family member nhr-153</fullName>
    </recommendedName>
</protein>
<organism>
    <name type="scientific">Caenorhabditis elegans</name>
    <dbReference type="NCBI Taxonomy" id="6239"/>
    <lineage>
        <taxon>Eukaryota</taxon>
        <taxon>Metazoa</taxon>
        <taxon>Ecdysozoa</taxon>
        <taxon>Nematoda</taxon>
        <taxon>Chromadorea</taxon>
        <taxon>Rhabditida</taxon>
        <taxon>Rhabditina</taxon>
        <taxon>Rhabditomorpha</taxon>
        <taxon>Rhabditoidea</taxon>
        <taxon>Rhabditidae</taxon>
        <taxon>Peloderinae</taxon>
        <taxon>Caenorhabditis</taxon>
    </lineage>
</organism>